<reference key="1">
    <citation type="journal article" date="2015" name="Genome Announc.">
        <title>Genome sequence of Aspergillus flavus NRRL 3357, a strain that causes aflatoxin contamination of food and feed.</title>
        <authorList>
            <person name="Nierman W.C."/>
            <person name="Yu J."/>
            <person name="Fedorova-Abrams N.D."/>
            <person name="Losada L."/>
            <person name="Cleveland T.E."/>
            <person name="Bhatnagar D."/>
            <person name="Bennett J.W."/>
            <person name="Dean R."/>
            <person name="Payne G.A."/>
        </authorList>
    </citation>
    <scope>NUCLEOTIDE SEQUENCE [LARGE SCALE GENOMIC DNA]</scope>
    <source>
        <strain>ATCC 200026 / FGSC A1120 / IAM 13836 / NRRL 3357 / JCM 12722 / SRRC 167</strain>
    </source>
</reference>
<keyword id="KW-0325">Glycoprotein</keyword>
<keyword id="KW-0378">Hydrolase</keyword>
<keyword id="KW-0479">Metal-binding</keyword>
<keyword id="KW-0482">Metalloprotease</keyword>
<keyword id="KW-0645">Protease</keyword>
<keyword id="KW-0964">Secreted</keyword>
<keyword id="KW-0732">Signal</keyword>
<keyword id="KW-0862">Zinc</keyword>
<keyword id="KW-0865">Zymogen</keyword>
<name>MEP2_ASPFN</name>
<protein>
    <recommendedName>
        <fullName>Extracellular metalloproteinase mep</fullName>
        <ecNumber>3.4.24.-</ecNumber>
    </recommendedName>
    <alternativeName>
        <fullName>Elastinolytic metalloproteinase mep</fullName>
    </alternativeName>
    <alternativeName>
        <fullName>Fungalysin mep</fullName>
    </alternativeName>
</protein>
<feature type="signal peptide" evidence="2">
    <location>
        <begin position="1"/>
        <end position="16"/>
    </location>
</feature>
<feature type="propeptide" id="PRO_0000407160" evidence="1">
    <location>
        <begin position="17"/>
        <end position="245"/>
    </location>
</feature>
<feature type="chain" id="PRO_0000407161" description="Extracellular metalloproteinase mep">
    <location>
        <begin position="246"/>
        <end position="639"/>
    </location>
</feature>
<feature type="active site" evidence="3">
    <location>
        <position position="430"/>
    </location>
</feature>
<feature type="binding site" evidence="3">
    <location>
        <position position="429"/>
    </location>
    <ligand>
        <name>Zn(2+)</name>
        <dbReference type="ChEBI" id="CHEBI:29105"/>
        <note>catalytic</note>
    </ligand>
</feature>
<feature type="binding site" evidence="3">
    <location>
        <position position="433"/>
    </location>
    <ligand>
        <name>Zn(2+)</name>
        <dbReference type="ChEBI" id="CHEBI:29105"/>
        <note>catalytic</note>
    </ligand>
</feature>
<feature type="glycosylation site" description="N-linked (GlcNAc...) asparagine" evidence="2">
    <location>
        <position position="287"/>
    </location>
</feature>
<feature type="glycosylation site" description="N-linked (GlcNAc...) asparagine" evidence="2">
    <location>
        <position position="320"/>
    </location>
</feature>
<feature type="glycosylation site" description="N-linked (GlcNAc...) asparagine" evidence="2">
    <location>
        <position position="336"/>
    </location>
</feature>
<feature type="glycosylation site" description="N-linked (GlcNAc...) asparagine" evidence="2">
    <location>
        <position position="368"/>
    </location>
</feature>
<feature type="glycosylation site" description="N-linked (GlcNAc...) asparagine" evidence="2">
    <location>
        <position position="509"/>
    </location>
</feature>
<dbReference type="EC" id="3.4.24.-"/>
<dbReference type="EMBL" id="EQ963481">
    <property type="protein sequence ID" value="EED48216.1"/>
    <property type="molecule type" value="Genomic_DNA"/>
</dbReference>
<dbReference type="RefSeq" id="XP_002381632.1">
    <property type="nucleotide sequence ID" value="XM_002381591.1"/>
</dbReference>
<dbReference type="SMR" id="B8NMK3"/>
<dbReference type="STRING" id="332952.B8NMK3"/>
<dbReference type="MEROPS" id="M36.001"/>
<dbReference type="GlyCosmos" id="B8NMK3">
    <property type="glycosylation" value="5 sites, No reported glycans"/>
</dbReference>
<dbReference type="EnsemblFungi" id="EED48216">
    <property type="protein sequence ID" value="EED48216"/>
    <property type="gene ID" value="AFLA_124390"/>
</dbReference>
<dbReference type="VEuPathDB" id="FungiDB:AFLA_012226"/>
<dbReference type="eggNOG" id="ENOG502QTDC">
    <property type="taxonomic scope" value="Eukaryota"/>
</dbReference>
<dbReference type="HOGENOM" id="CLU_012703_3_0_1"/>
<dbReference type="OMA" id="CLVWRVE"/>
<dbReference type="GO" id="GO:0005576">
    <property type="term" value="C:extracellular region"/>
    <property type="evidence" value="ECO:0007669"/>
    <property type="project" value="UniProtKB-SubCell"/>
</dbReference>
<dbReference type="GO" id="GO:0004222">
    <property type="term" value="F:metalloendopeptidase activity"/>
    <property type="evidence" value="ECO:0007669"/>
    <property type="project" value="InterPro"/>
</dbReference>
<dbReference type="GO" id="GO:0008270">
    <property type="term" value="F:zinc ion binding"/>
    <property type="evidence" value="ECO:0007669"/>
    <property type="project" value="InterPro"/>
</dbReference>
<dbReference type="GO" id="GO:0006508">
    <property type="term" value="P:proteolysis"/>
    <property type="evidence" value="ECO:0007669"/>
    <property type="project" value="UniProtKB-KW"/>
</dbReference>
<dbReference type="CDD" id="cd09596">
    <property type="entry name" value="M36"/>
    <property type="match status" value="1"/>
</dbReference>
<dbReference type="Gene3D" id="3.10.170.10">
    <property type="match status" value="1"/>
</dbReference>
<dbReference type="Gene3D" id="1.10.390.10">
    <property type="entry name" value="Neutral Protease Domain 2"/>
    <property type="match status" value="1"/>
</dbReference>
<dbReference type="InterPro" id="IPR011096">
    <property type="entry name" value="FTP_domain"/>
</dbReference>
<dbReference type="InterPro" id="IPR050371">
    <property type="entry name" value="Fungal_virulence_M36"/>
</dbReference>
<dbReference type="InterPro" id="IPR001842">
    <property type="entry name" value="Peptidase_M36"/>
</dbReference>
<dbReference type="InterPro" id="IPR027268">
    <property type="entry name" value="Peptidase_M4/M1_CTD_sf"/>
</dbReference>
<dbReference type="PANTHER" id="PTHR33478">
    <property type="entry name" value="EXTRACELLULAR METALLOPROTEINASE MEP"/>
    <property type="match status" value="1"/>
</dbReference>
<dbReference type="PANTHER" id="PTHR33478:SF1">
    <property type="entry name" value="EXTRACELLULAR METALLOPROTEINASE MEP"/>
    <property type="match status" value="1"/>
</dbReference>
<dbReference type="Pfam" id="PF07504">
    <property type="entry name" value="FTP"/>
    <property type="match status" value="1"/>
</dbReference>
<dbReference type="Pfam" id="PF02128">
    <property type="entry name" value="Peptidase_M36"/>
    <property type="match status" value="1"/>
</dbReference>
<dbReference type="PRINTS" id="PR00999">
    <property type="entry name" value="FUNGALYSIN"/>
</dbReference>
<dbReference type="SUPFAM" id="SSF55486">
    <property type="entry name" value="Metalloproteases ('zincins'), catalytic domain"/>
    <property type="match status" value="1"/>
</dbReference>
<dbReference type="PROSITE" id="PS00142">
    <property type="entry name" value="ZINC_PROTEASE"/>
    <property type="match status" value="1"/>
</dbReference>
<sequence>MHMLSFIGALALPVFVCAQSCEPASLSPRLAGVDLEKFRLTPNAEYVDSDQQIPISTTNVGLIEQSYVETAIKLVRETFPTASFRLREDHYVGDNGVAHVHFRQTVHDLDVDNGDFNVNVGRDGSVFSYGNSFYTGPVPSITQLTKRDFTDPVAALKFALTHLQLPITAGDVSAESTEHPHKYILRGTSGAVTDPKARLVYLVKPEGTLCLVWRVETDVDDNWLLTYVDAKTAEDIHGVVDYISEATFQVYGWGINDPGQVDSRAVLTDPWNLKESPLTWFSDGQKNWTTTRGNNGIAQENINNLPTYLNNFRPDSPTQNFSYEYPAGGSPKDYINASITQLFYTANAYHDLLYTLGFNEKAGNFQWNNSGLGGKDKDYVILNAQDGASRNNADFATPPDGSPARMRMYLFTHTTPPRDGVFESGIVIHEYTHGLSMRLTGGPDNSRCLSAFESASMGEGWGDFMATAIRLKPSDTRATDYGMGMWVYNDEKGIRQYLYSTSMETNPLNYTSLNRMWEAHAGGTVWASMLYEVLWNLIDKHGKNDGPRPTFDERGVPRDGKYLAMKIVIDAMALQPCNPDFVQARNAILDADQALTGGQNKCEIWTGFAKRGLGQGAEYGRGRRVGSYDIPSGVCQKKI</sequence>
<proteinExistence type="inferred from homology"/>
<gene>
    <name type="primary">mep</name>
    <name type="ORF">AFLA_124390</name>
</gene>
<evidence type="ECO:0000250" key="1"/>
<evidence type="ECO:0000255" key="2"/>
<evidence type="ECO:0000255" key="3">
    <source>
        <dbReference type="PROSITE-ProRule" id="PRU10095"/>
    </source>
</evidence>
<evidence type="ECO:0000305" key="4"/>
<organism>
    <name type="scientific">Aspergillus flavus (strain ATCC 200026 / FGSC A1120 / IAM 13836 / NRRL 3357 / JCM 12722 / SRRC 167)</name>
    <dbReference type="NCBI Taxonomy" id="332952"/>
    <lineage>
        <taxon>Eukaryota</taxon>
        <taxon>Fungi</taxon>
        <taxon>Dikarya</taxon>
        <taxon>Ascomycota</taxon>
        <taxon>Pezizomycotina</taxon>
        <taxon>Eurotiomycetes</taxon>
        <taxon>Eurotiomycetidae</taxon>
        <taxon>Eurotiales</taxon>
        <taxon>Aspergillaceae</taxon>
        <taxon>Aspergillus</taxon>
        <taxon>Aspergillus subgen. Circumdati</taxon>
    </lineage>
</organism>
<comment type="function">
    <text evidence="1">Secreted metalloproteinase that allows assimilation of proteinaceous substrates.</text>
</comment>
<comment type="cofactor">
    <cofactor evidence="1">
        <name>Zn(2+)</name>
        <dbReference type="ChEBI" id="CHEBI:29105"/>
    </cofactor>
    <text evidence="1">Binds 1 zinc ion per subunit.</text>
</comment>
<comment type="subcellular location">
    <subcellularLocation>
        <location evidence="1">Secreted</location>
    </subcellularLocation>
</comment>
<comment type="similarity">
    <text evidence="4">Belongs to the peptidase M36 family.</text>
</comment>
<accession>B8NMK3</accession>